<reference key="1">
    <citation type="journal article" date="2005" name="Nature">
        <title>Genomic sequence of the pathogenic and allergenic filamentous fungus Aspergillus fumigatus.</title>
        <authorList>
            <person name="Nierman W.C."/>
            <person name="Pain A."/>
            <person name="Anderson M.J."/>
            <person name="Wortman J.R."/>
            <person name="Kim H.S."/>
            <person name="Arroyo J."/>
            <person name="Berriman M."/>
            <person name="Abe K."/>
            <person name="Archer D.B."/>
            <person name="Bermejo C."/>
            <person name="Bennett J.W."/>
            <person name="Bowyer P."/>
            <person name="Chen D."/>
            <person name="Collins M."/>
            <person name="Coulsen R."/>
            <person name="Davies R."/>
            <person name="Dyer P.S."/>
            <person name="Farman M.L."/>
            <person name="Fedorova N."/>
            <person name="Fedorova N.D."/>
            <person name="Feldblyum T.V."/>
            <person name="Fischer R."/>
            <person name="Fosker N."/>
            <person name="Fraser A."/>
            <person name="Garcia J.L."/>
            <person name="Garcia M.J."/>
            <person name="Goble A."/>
            <person name="Goldman G.H."/>
            <person name="Gomi K."/>
            <person name="Griffith-Jones S."/>
            <person name="Gwilliam R."/>
            <person name="Haas B.J."/>
            <person name="Haas H."/>
            <person name="Harris D.E."/>
            <person name="Horiuchi H."/>
            <person name="Huang J."/>
            <person name="Humphray S."/>
            <person name="Jimenez J."/>
            <person name="Keller N."/>
            <person name="Khouri H."/>
            <person name="Kitamoto K."/>
            <person name="Kobayashi T."/>
            <person name="Konzack S."/>
            <person name="Kulkarni R."/>
            <person name="Kumagai T."/>
            <person name="Lafton A."/>
            <person name="Latge J.-P."/>
            <person name="Li W."/>
            <person name="Lord A."/>
            <person name="Lu C."/>
            <person name="Majoros W.H."/>
            <person name="May G.S."/>
            <person name="Miller B.L."/>
            <person name="Mohamoud Y."/>
            <person name="Molina M."/>
            <person name="Monod M."/>
            <person name="Mouyna I."/>
            <person name="Mulligan S."/>
            <person name="Murphy L.D."/>
            <person name="O'Neil S."/>
            <person name="Paulsen I."/>
            <person name="Penalva M.A."/>
            <person name="Pertea M."/>
            <person name="Price C."/>
            <person name="Pritchard B.L."/>
            <person name="Quail M.A."/>
            <person name="Rabbinowitsch E."/>
            <person name="Rawlins N."/>
            <person name="Rajandream M.A."/>
            <person name="Reichard U."/>
            <person name="Renauld H."/>
            <person name="Robson G.D."/>
            <person name="Rodriguez de Cordoba S."/>
            <person name="Rodriguez-Pena J.M."/>
            <person name="Ronning C.M."/>
            <person name="Rutter S."/>
            <person name="Salzberg S.L."/>
            <person name="Sanchez M."/>
            <person name="Sanchez-Ferrero J.C."/>
            <person name="Saunders D."/>
            <person name="Seeger K."/>
            <person name="Squares R."/>
            <person name="Squares S."/>
            <person name="Takeuchi M."/>
            <person name="Tekaia F."/>
            <person name="Turner G."/>
            <person name="Vazquez de Aldana C.R."/>
            <person name="Weidman J."/>
            <person name="White O."/>
            <person name="Woodward J.R."/>
            <person name="Yu J.-H."/>
            <person name="Fraser C.M."/>
            <person name="Galagan J.E."/>
            <person name="Asai K."/>
            <person name="Machida M."/>
            <person name="Hall N."/>
            <person name="Barrell B.G."/>
            <person name="Denning D.W."/>
        </authorList>
    </citation>
    <scope>NUCLEOTIDE SEQUENCE [LARGE SCALE GENOMIC DNA]</scope>
    <source>
        <strain>ATCC MYA-4609 / CBS 101355 / FGSC A1100 / Af293</strain>
    </source>
</reference>
<accession>Q4WPW2</accession>
<organism>
    <name type="scientific">Aspergillus fumigatus (strain ATCC MYA-4609 / CBS 101355 / FGSC A1100 / Af293)</name>
    <name type="common">Neosartorya fumigata</name>
    <dbReference type="NCBI Taxonomy" id="330879"/>
    <lineage>
        <taxon>Eukaryota</taxon>
        <taxon>Fungi</taxon>
        <taxon>Dikarya</taxon>
        <taxon>Ascomycota</taxon>
        <taxon>Pezizomycotina</taxon>
        <taxon>Eurotiomycetes</taxon>
        <taxon>Eurotiomycetidae</taxon>
        <taxon>Eurotiales</taxon>
        <taxon>Aspergillaceae</taxon>
        <taxon>Aspergillus</taxon>
        <taxon>Aspergillus subgen. Fumigati</taxon>
    </lineage>
</organism>
<dbReference type="EMBL" id="AAHF01000005">
    <property type="protein sequence ID" value="EAL89722.1"/>
    <property type="molecule type" value="Genomic_DNA"/>
</dbReference>
<dbReference type="RefSeq" id="XP_751760.1">
    <property type="nucleotide sequence ID" value="XM_746667.1"/>
</dbReference>
<dbReference type="SMR" id="Q4WPW2"/>
<dbReference type="FunCoup" id="Q4WPW2">
    <property type="interactions" value="647"/>
</dbReference>
<dbReference type="STRING" id="330879.Q4WPW2"/>
<dbReference type="EnsemblFungi" id="EAL89722">
    <property type="protein sequence ID" value="EAL89722"/>
    <property type="gene ID" value="AFUA_4G10660"/>
</dbReference>
<dbReference type="GeneID" id="3509557"/>
<dbReference type="KEGG" id="afm:AFUA_4G10660"/>
<dbReference type="VEuPathDB" id="FungiDB:Afu4g10660"/>
<dbReference type="eggNOG" id="KOG3001">
    <property type="taxonomic scope" value="Eukaryota"/>
</dbReference>
<dbReference type="HOGENOM" id="CLU_039566_1_1_1"/>
<dbReference type="InParanoid" id="Q4WPW2"/>
<dbReference type="OMA" id="GLQTYFD"/>
<dbReference type="OrthoDB" id="124855at2759"/>
<dbReference type="Proteomes" id="UP000002530">
    <property type="component" value="Chromosome 4"/>
</dbReference>
<dbReference type="GO" id="GO:0035267">
    <property type="term" value="C:NuA4 histone acetyltransferase complex"/>
    <property type="evidence" value="ECO:0000318"/>
    <property type="project" value="GO_Central"/>
</dbReference>
<dbReference type="GO" id="GO:0032221">
    <property type="term" value="C:Rpd3S complex"/>
    <property type="evidence" value="ECO:0000318"/>
    <property type="project" value="GO_Central"/>
</dbReference>
<dbReference type="GO" id="GO:0006338">
    <property type="term" value="P:chromatin remodeling"/>
    <property type="evidence" value="ECO:0007669"/>
    <property type="project" value="UniProtKB-ARBA"/>
</dbReference>
<dbReference type="GO" id="GO:0006281">
    <property type="term" value="P:DNA repair"/>
    <property type="evidence" value="ECO:0007669"/>
    <property type="project" value="UniProtKB-KW"/>
</dbReference>
<dbReference type="GO" id="GO:0006355">
    <property type="term" value="P:regulation of DNA-templated transcription"/>
    <property type="evidence" value="ECO:0007669"/>
    <property type="project" value="InterPro"/>
</dbReference>
<dbReference type="CDD" id="cd18983">
    <property type="entry name" value="CBD_MSL3_like"/>
    <property type="match status" value="1"/>
</dbReference>
<dbReference type="FunFam" id="2.30.30.140:FF:000077">
    <property type="entry name" value="Chromatin modification-related protein eaf3"/>
    <property type="match status" value="1"/>
</dbReference>
<dbReference type="FunFam" id="1.10.274.30:FF:000004">
    <property type="entry name" value="Putative Chromatin modification-related protein eaf3"/>
    <property type="match status" value="1"/>
</dbReference>
<dbReference type="Gene3D" id="2.30.30.140">
    <property type="match status" value="1"/>
</dbReference>
<dbReference type="Gene3D" id="1.10.274.30">
    <property type="entry name" value="MRG domain"/>
    <property type="match status" value="1"/>
</dbReference>
<dbReference type="InterPro" id="IPR016197">
    <property type="entry name" value="Chromo-like_dom_sf"/>
</dbReference>
<dbReference type="InterPro" id="IPR000953">
    <property type="entry name" value="Chromo/chromo_shadow_dom"/>
</dbReference>
<dbReference type="InterPro" id="IPR008676">
    <property type="entry name" value="MRG"/>
</dbReference>
<dbReference type="InterPro" id="IPR038217">
    <property type="entry name" value="MRG_C_sf"/>
</dbReference>
<dbReference type="InterPro" id="IPR026541">
    <property type="entry name" value="MRG_dom"/>
</dbReference>
<dbReference type="InterPro" id="IPR053820">
    <property type="entry name" value="MSL3_chromo-like"/>
</dbReference>
<dbReference type="PANTHER" id="PTHR10880">
    <property type="entry name" value="MORTALITY FACTOR 4-LIKE PROTEIN"/>
    <property type="match status" value="1"/>
</dbReference>
<dbReference type="PANTHER" id="PTHR10880:SF15">
    <property type="entry name" value="MSL COMPLEX SUBUNIT 3"/>
    <property type="match status" value="1"/>
</dbReference>
<dbReference type="Pfam" id="PF05712">
    <property type="entry name" value="MRG"/>
    <property type="match status" value="1"/>
</dbReference>
<dbReference type="Pfam" id="PF22732">
    <property type="entry name" value="MSL3_chromo-like"/>
    <property type="match status" value="1"/>
</dbReference>
<dbReference type="PIRSF" id="PIRSF038133">
    <property type="entry name" value="HAT_Nua4_EAF3/MRG15"/>
    <property type="match status" value="1"/>
</dbReference>
<dbReference type="SMART" id="SM00298">
    <property type="entry name" value="CHROMO"/>
    <property type="match status" value="1"/>
</dbReference>
<dbReference type="SUPFAM" id="SSF54160">
    <property type="entry name" value="Chromo domain-like"/>
    <property type="match status" value="1"/>
</dbReference>
<dbReference type="PROSITE" id="PS51640">
    <property type="entry name" value="MRG"/>
    <property type="match status" value="1"/>
</dbReference>
<gene>
    <name type="primary">eaf3</name>
    <name type="ORF">AFUA_4G10660</name>
</gene>
<comment type="function">
    <text evidence="1">Involved in deacetylation of histones, chromatin assembly and chromosome segregation. May act as a transcriptional oscillator, directing histone deacetylases to specific chromosomal domains. Component of the NuA4 histone acetyltransferase complex which is involved in transcriptional activation of selected genes principally by acetylation of nucleosomal histone H4 and H2A. The NuA4 complex is also involved in DNA repair (By similarity).</text>
</comment>
<comment type="subunit">
    <text evidence="1">Component of the NuA4 histone acetyltransferase complex.</text>
</comment>
<comment type="subcellular location">
    <subcellularLocation>
        <location evidence="3">Nucleus</location>
    </subcellularLocation>
</comment>
<comment type="similarity">
    <text evidence="5">Belongs to the MRG family.</text>
</comment>
<keyword id="KW-0156">Chromatin regulator</keyword>
<keyword id="KW-0227">DNA damage</keyword>
<keyword id="KW-0234">DNA repair</keyword>
<keyword id="KW-0539">Nucleus</keyword>
<keyword id="KW-1185">Reference proteome</keyword>
<keyword id="KW-0804">Transcription</keyword>
<keyword id="KW-0805">Transcription regulation</keyword>
<protein>
    <recommendedName>
        <fullName>Chromatin modification-related protein eaf3</fullName>
    </recommendedName>
</protein>
<proteinExistence type="inferred from homology"/>
<name>EAF3_ASPFU</name>
<sequence>MAPASQSTYQKDERVLCFHHEILYEAKILDVRHTNAEDKKSPFEYLVHYKGWKNTWDDWVPQDRLRKFTDENRELATTLRREAEAAFRQKSTKTTLKRKAGSDRGSARDSEERQTSVPGRVTKRARDNEIEKEEHFYTRPSVRIVMPDNLKSLLVDDWENVTKNQQVVALPAKASVNQILEDFVAEEKPKRTSSADLDVLEEVIMGIKEYFDKALDKILLYRFEREQYKALRKKWEAGSGEYSEKGPLDVYGAEHLTRLFATMPELIAQTNMDLQSTNRLREELSKFTLWLSKNSDKYFATRYMTATNEYVEKSRGNPSAAATAATTRLV</sequence>
<evidence type="ECO:0000250" key="1"/>
<evidence type="ECO:0000255" key="2"/>
<evidence type="ECO:0000255" key="3">
    <source>
        <dbReference type="PROSITE-ProRule" id="PRU00972"/>
    </source>
</evidence>
<evidence type="ECO:0000256" key="4">
    <source>
        <dbReference type="SAM" id="MobiDB-lite"/>
    </source>
</evidence>
<evidence type="ECO:0000305" key="5"/>
<feature type="chain" id="PRO_0000088773" description="Chromatin modification-related protein eaf3">
    <location>
        <begin position="1"/>
        <end position="330"/>
    </location>
</feature>
<feature type="domain" description="Tudor-knot" evidence="2">
    <location>
        <begin position="13"/>
        <end position="66"/>
    </location>
</feature>
<feature type="domain" description="MRG" evidence="3">
    <location>
        <begin position="138"/>
        <end position="315"/>
    </location>
</feature>
<feature type="region of interest" description="Disordered" evidence="4">
    <location>
        <begin position="86"/>
        <end position="125"/>
    </location>
</feature>
<feature type="compositionally biased region" description="Basic and acidic residues" evidence="4">
    <location>
        <begin position="100"/>
        <end position="114"/>
    </location>
</feature>